<protein>
    <recommendedName>
        <fullName>SAFB-like transcription modulator</fullName>
    </recommendedName>
    <alternativeName>
        <fullName>Modulator of estrogen-induced transcription</fullName>
    </alternativeName>
</protein>
<reference key="1">
    <citation type="journal article" date="2004" name="Nat. Genet.">
        <title>Complete sequencing and characterization of 21,243 full-length human cDNAs.</title>
        <authorList>
            <person name="Ota T."/>
            <person name="Suzuki Y."/>
            <person name="Nishikawa T."/>
            <person name="Otsuki T."/>
            <person name="Sugiyama T."/>
            <person name="Irie R."/>
            <person name="Wakamatsu A."/>
            <person name="Hayashi K."/>
            <person name="Sato H."/>
            <person name="Nagai K."/>
            <person name="Kimura K."/>
            <person name="Makita H."/>
            <person name="Sekine M."/>
            <person name="Obayashi M."/>
            <person name="Nishi T."/>
            <person name="Shibahara T."/>
            <person name="Tanaka T."/>
            <person name="Ishii S."/>
            <person name="Yamamoto J."/>
            <person name="Saito K."/>
            <person name="Kawai Y."/>
            <person name="Isono Y."/>
            <person name="Nakamura Y."/>
            <person name="Nagahari K."/>
            <person name="Murakami K."/>
            <person name="Yasuda T."/>
            <person name="Iwayanagi T."/>
            <person name="Wagatsuma M."/>
            <person name="Shiratori A."/>
            <person name="Sudo H."/>
            <person name="Hosoiri T."/>
            <person name="Kaku Y."/>
            <person name="Kodaira H."/>
            <person name="Kondo H."/>
            <person name="Sugawara M."/>
            <person name="Takahashi M."/>
            <person name="Kanda K."/>
            <person name="Yokoi T."/>
            <person name="Furuya T."/>
            <person name="Kikkawa E."/>
            <person name="Omura Y."/>
            <person name="Abe K."/>
            <person name="Kamihara K."/>
            <person name="Katsuta N."/>
            <person name="Sato K."/>
            <person name="Tanikawa M."/>
            <person name="Yamazaki M."/>
            <person name="Ninomiya K."/>
            <person name="Ishibashi T."/>
            <person name="Yamashita H."/>
            <person name="Murakawa K."/>
            <person name="Fujimori K."/>
            <person name="Tanai H."/>
            <person name="Kimata M."/>
            <person name="Watanabe M."/>
            <person name="Hiraoka S."/>
            <person name="Chiba Y."/>
            <person name="Ishida S."/>
            <person name="Ono Y."/>
            <person name="Takiguchi S."/>
            <person name="Watanabe S."/>
            <person name="Yosida M."/>
            <person name="Hotuta T."/>
            <person name="Kusano J."/>
            <person name="Kanehori K."/>
            <person name="Takahashi-Fujii A."/>
            <person name="Hara H."/>
            <person name="Tanase T.-O."/>
            <person name="Nomura Y."/>
            <person name="Togiya S."/>
            <person name="Komai F."/>
            <person name="Hara R."/>
            <person name="Takeuchi K."/>
            <person name="Arita M."/>
            <person name="Imose N."/>
            <person name="Musashino K."/>
            <person name="Yuuki H."/>
            <person name="Oshima A."/>
            <person name="Sasaki N."/>
            <person name="Aotsuka S."/>
            <person name="Yoshikawa Y."/>
            <person name="Matsunawa H."/>
            <person name="Ichihara T."/>
            <person name="Shiohata N."/>
            <person name="Sano S."/>
            <person name="Moriya S."/>
            <person name="Momiyama H."/>
            <person name="Satoh N."/>
            <person name="Takami S."/>
            <person name="Terashima Y."/>
            <person name="Suzuki O."/>
            <person name="Nakagawa S."/>
            <person name="Senoh A."/>
            <person name="Mizoguchi H."/>
            <person name="Goto Y."/>
            <person name="Shimizu F."/>
            <person name="Wakebe H."/>
            <person name="Hishigaki H."/>
            <person name="Watanabe T."/>
            <person name="Sugiyama A."/>
            <person name="Takemoto M."/>
            <person name="Kawakami B."/>
            <person name="Yamazaki M."/>
            <person name="Watanabe K."/>
            <person name="Kumagai A."/>
            <person name="Itakura S."/>
            <person name="Fukuzumi Y."/>
            <person name="Fujimori Y."/>
            <person name="Komiyama M."/>
            <person name="Tashiro H."/>
            <person name="Tanigami A."/>
            <person name="Fujiwara T."/>
            <person name="Ono T."/>
            <person name="Yamada K."/>
            <person name="Fujii Y."/>
            <person name="Ozaki K."/>
            <person name="Hirao M."/>
            <person name="Ohmori Y."/>
            <person name="Kawabata A."/>
            <person name="Hikiji T."/>
            <person name="Kobatake N."/>
            <person name="Inagaki H."/>
            <person name="Ikema Y."/>
            <person name="Okamoto S."/>
            <person name="Okitani R."/>
            <person name="Kawakami T."/>
            <person name="Noguchi S."/>
            <person name="Itoh T."/>
            <person name="Shigeta K."/>
            <person name="Senba T."/>
            <person name="Matsumura K."/>
            <person name="Nakajima Y."/>
            <person name="Mizuno T."/>
            <person name="Morinaga M."/>
            <person name="Sasaki M."/>
            <person name="Togashi T."/>
            <person name="Oyama M."/>
            <person name="Hata H."/>
            <person name="Watanabe M."/>
            <person name="Komatsu T."/>
            <person name="Mizushima-Sugano J."/>
            <person name="Satoh T."/>
            <person name="Shirai Y."/>
            <person name="Takahashi Y."/>
            <person name="Nakagawa K."/>
            <person name="Okumura K."/>
            <person name="Nagase T."/>
            <person name="Nomura N."/>
            <person name="Kikuchi H."/>
            <person name="Masuho Y."/>
            <person name="Yamashita R."/>
            <person name="Nakai K."/>
            <person name="Yada T."/>
            <person name="Nakamura Y."/>
            <person name="Ohara O."/>
            <person name="Isogai T."/>
            <person name="Sugano S."/>
        </authorList>
    </citation>
    <scope>NUCLEOTIDE SEQUENCE [LARGE SCALE MRNA] (ISOFORMS 1 AND 2)</scope>
    <source>
        <tissue>Brain</tissue>
        <tissue>Embryo</tissue>
        <tissue>Tongue</tissue>
    </source>
</reference>
<reference key="2">
    <citation type="journal article" date="2006" name="Nature">
        <title>Analysis of the DNA sequence and duplication history of human chromosome 15.</title>
        <authorList>
            <person name="Zody M.C."/>
            <person name="Garber M."/>
            <person name="Sharpe T."/>
            <person name="Young S.K."/>
            <person name="Rowen L."/>
            <person name="O'Neill K."/>
            <person name="Whittaker C.A."/>
            <person name="Kamal M."/>
            <person name="Chang J.L."/>
            <person name="Cuomo C.A."/>
            <person name="Dewar K."/>
            <person name="FitzGerald M.G."/>
            <person name="Kodira C.D."/>
            <person name="Madan A."/>
            <person name="Qin S."/>
            <person name="Yang X."/>
            <person name="Abbasi N."/>
            <person name="Abouelleil A."/>
            <person name="Arachchi H.M."/>
            <person name="Baradarani L."/>
            <person name="Birditt B."/>
            <person name="Bloom S."/>
            <person name="Bloom T."/>
            <person name="Borowsky M.L."/>
            <person name="Burke J."/>
            <person name="Butler J."/>
            <person name="Cook A."/>
            <person name="DeArellano K."/>
            <person name="DeCaprio D."/>
            <person name="Dorris L. III"/>
            <person name="Dors M."/>
            <person name="Eichler E.E."/>
            <person name="Engels R."/>
            <person name="Fahey J."/>
            <person name="Fleetwood P."/>
            <person name="Friedman C."/>
            <person name="Gearin G."/>
            <person name="Hall J.L."/>
            <person name="Hensley G."/>
            <person name="Johnson E."/>
            <person name="Jones C."/>
            <person name="Kamat A."/>
            <person name="Kaur A."/>
            <person name="Locke D.P."/>
            <person name="Madan A."/>
            <person name="Munson G."/>
            <person name="Jaffe D.B."/>
            <person name="Lui A."/>
            <person name="Macdonald P."/>
            <person name="Mauceli E."/>
            <person name="Naylor J.W."/>
            <person name="Nesbitt R."/>
            <person name="Nicol R."/>
            <person name="O'Leary S.B."/>
            <person name="Ratcliffe A."/>
            <person name="Rounsley S."/>
            <person name="She X."/>
            <person name="Sneddon K.M.B."/>
            <person name="Stewart S."/>
            <person name="Sougnez C."/>
            <person name="Stone S.M."/>
            <person name="Topham K."/>
            <person name="Vincent D."/>
            <person name="Wang S."/>
            <person name="Zimmer A.R."/>
            <person name="Birren B.W."/>
            <person name="Hood L."/>
            <person name="Lander E.S."/>
            <person name="Nusbaum C."/>
        </authorList>
    </citation>
    <scope>NUCLEOTIDE SEQUENCE [LARGE SCALE GENOMIC DNA]</scope>
</reference>
<reference key="3">
    <citation type="journal article" date="2004" name="Genome Res.">
        <title>The status, quality, and expansion of the NIH full-length cDNA project: the Mammalian Gene Collection (MGC).</title>
        <authorList>
            <consortium name="The MGC Project Team"/>
        </authorList>
    </citation>
    <scope>NUCLEOTIDE SEQUENCE [LARGE SCALE MRNA] (ISOFORM 1)</scope>
    <source>
        <tissue>Colon</tissue>
        <tissue>PNS</tissue>
        <tissue>Testis</tissue>
    </source>
</reference>
<reference key="4">
    <citation type="submission" date="2008-12" db="UniProtKB">
        <authorList>
            <person name="Bienvenut W.V."/>
            <person name="Lilla S."/>
            <person name="von Kriegsheim A."/>
            <person name="Lempens A."/>
            <person name="Kolch W."/>
        </authorList>
    </citation>
    <scope>PROTEIN SEQUENCE OF 2-20; 777-792 AND 989-1017</scope>
    <scope>CLEAVAGE OF INITIATOR METHIONINE</scope>
    <scope>ACETYLATION AT ALA-2</scope>
    <scope>IDENTIFICATION BY MASS SPECTROMETRY</scope>
    <source>
        <tissue>Ovarian carcinoma</tissue>
    </source>
</reference>
<reference key="5">
    <citation type="journal article" date="2007" name="BMC Genomics">
        <title>The full-ORF clone resource of the German cDNA consortium.</title>
        <authorList>
            <person name="Bechtel S."/>
            <person name="Rosenfelder H."/>
            <person name="Duda A."/>
            <person name="Schmidt C.P."/>
            <person name="Ernst U."/>
            <person name="Wellenreuther R."/>
            <person name="Mehrle A."/>
            <person name="Schuster C."/>
            <person name="Bahr A."/>
            <person name="Bloecker H."/>
            <person name="Heubner D."/>
            <person name="Hoerlein A."/>
            <person name="Michel G."/>
            <person name="Wedler H."/>
            <person name="Koehrer K."/>
            <person name="Ottenwaelder B."/>
            <person name="Poustka A."/>
            <person name="Wiemann S."/>
            <person name="Schupp I."/>
        </authorList>
    </citation>
    <scope>NUCLEOTIDE SEQUENCE [LARGE SCALE MRNA] OF 666-1034 (ISOFORM 1/2)</scope>
    <source>
        <tissue>Melanoma</tissue>
    </source>
</reference>
<reference key="6">
    <citation type="journal article" date="2006" name="Cell">
        <title>Global, in vivo, and site-specific phosphorylation dynamics in signaling networks.</title>
        <authorList>
            <person name="Olsen J.V."/>
            <person name="Blagoev B."/>
            <person name="Gnad F."/>
            <person name="Macek B."/>
            <person name="Kumar C."/>
            <person name="Mortensen P."/>
            <person name="Mann M."/>
        </authorList>
    </citation>
    <scope>PHOSPHORYLATION [LARGE SCALE ANALYSIS] AT SER-93; SER-97; SER-289; SER-553 AND SER-1002</scope>
    <scope>IDENTIFICATION BY MASS SPECTROMETRY [LARGE SCALE ANALYSIS]</scope>
    <source>
        <tissue>Cervix carcinoma</tissue>
    </source>
</reference>
<reference key="7">
    <citation type="journal article" date="2006" name="Nat. Biotechnol.">
        <title>A probability-based approach for high-throughput protein phosphorylation analysis and site localization.</title>
        <authorList>
            <person name="Beausoleil S.A."/>
            <person name="Villen J."/>
            <person name="Gerber S.A."/>
            <person name="Rush J."/>
            <person name="Gygi S.P."/>
        </authorList>
    </citation>
    <scope>PHOSPHORYLATION [LARGE SCALE ANALYSIS] AT SER-289</scope>
    <scope>IDENTIFICATION BY MASS SPECTROMETRY [LARGE SCALE ANALYSIS]</scope>
    <source>
        <tissue>Cervix carcinoma</tissue>
    </source>
</reference>
<reference key="8">
    <citation type="journal article" date="2008" name="J. Proteome Res.">
        <title>Combining protein-based IMAC, peptide-based IMAC, and MudPIT for efficient phosphoproteomic analysis.</title>
        <authorList>
            <person name="Cantin G.T."/>
            <person name="Yi W."/>
            <person name="Lu B."/>
            <person name="Park S.K."/>
            <person name="Xu T."/>
            <person name="Lee J.-D."/>
            <person name="Yates J.R. III"/>
        </authorList>
    </citation>
    <scope>PHOSPHORYLATION [LARGE SCALE ANALYSIS] AT SER-1002</scope>
    <scope>IDENTIFICATION BY MASS SPECTROMETRY [LARGE SCALE ANALYSIS]</scope>
    <source>
        <tissue>Cervix carcinoma</tissue>
    </source>
</reference>
<reference key="9">
    <citation type="journal article" date="2008" name="Mol. Cell">
        <title>Kinase-selective enrichment enables quantitative phosphoproteomics of the kinome across the cell cycle.</title>
        <authorList>
            <person name="Daub H."/>
            <person name="Olsen J.V."/>
            <person name="Bairlein M."/>
            <person name="Gnad F."/>
            <person name="Oppermann F.S."/>
            <person name="Korner R."/>
            <person name="Greff Z."/>
            <person name="Keri G."/>
            <person name="Stemmann O."/>
            <person name="Mann M."/>
        </authorList>
    </citation>
    <scope>PHOSPHORYLATION [LARGE SCALE ANALYSIS] AT SER-289; SER-553 AND SER-1002</scope>
    <scope>IDENTIFICATION BY MASS SPECTROMETRY [LARGE SCALE ANALYSIS]</scope>
    <source>
        <tissue>Cervix carcinoma</tissue>
    </source>
</reference>
<reference key="10">
    <citation type="journal article" date="2008" name="Proc. Natl. Acad. Sci. U.S.A.">
        <title>A quantitative atlas of mitotic phosphorylation.</title>
        <authorList>
            <person name="Dephoure N."/>
            <person name="Zhou C."/>
            <person name="Villen J."/>
            <person name="Beausoleil S.A."/>
            <person name="Bakalarski C.E."/>
            <person name="Elledge S.J."/>
            <person name="Gygi S.P."/>
        </authorList>
    </citation>
    <scope>PHOSPHORYLATION [LARGE SCALE ANALYSIS] AT SER-550; SER-551; SER-553; SER-1002 AND SER-1014</scope>
    <scope>IDENTIFICATION BY MASS SPECTROMETRY [LARGE SCALE ANALYSIS]</scope>
    <source>
        <tissue>Cervix carcinoma</tissue>
    </source>
</reference>
<reference key="11">
    <citation type="journal article" date="2009" name="Anal. Chem.">
        <title>Lys-N and trypsin cover complementary parts of the phosphoproteome in a refined SCX-based approach.</title>
        <authorList>
            <person name="Gauci S."/>
            <person name="Helbig A.O."/>
            <person name="Slijper M."/>
            <person name="Krijgsveld J."/>
            <person name="Heck A.J."/>
            <person name="Mohammed S."/>
        </authorList>
    </citation>
    <scope>ACETYLATION [LARGE SCALE ANALYSIS] AT ALA-2</scope>
    <scope>CLEAVAGE OF INITIATOR METHIONINE [LARGE SCALE ANALYSIS]</scope>
    <scope>IDENTIFICATION BY MASS SPECTROMETRY [LARGE SCALE ANALYSIS]</scope>
</reference>
<reference key="12">
    <citation type="journal article" date="2009" name="Mol. Cell. Proteomics">
        <title>Large-scale proteomics analysis of the human kinome.</title>
        <authorList>
            <person name="Oppermann F.S."/>
            <person name="Gnad F."/>
            <person name="Olsen J.V."/>
            <person name="Hornberger R."/>
            <person name="Greff Z."/>
            <person name="Keri G."/>
            <person name="Mann M."/>
            <person name="Daub H."/>
        </authorList>
    </citation>
    <scope>PHOSPHORYLATION [LARGE SCALE ANALYSIS] AT SER-289; SER-553 AND SER-748</scope>
    <scope>IDENTIFICATION BY MASS SPECTROMETRY [LARGE SCALE ANALYSIS]</scope>
</reference>
<reference key="13">
    <citation type="journal article" date="2009" name="Science">
        <title>Lysine acetylation targets protein complexes and co-regulates major cellular functions.</title>
        <authorList>
            <person name="Choudhary C."/>
            <person name="Kumar C."/>
            <person name="Gnad F."/>
            <person name="Nielsen M.L."/>
            <person name="Rehman M."/>
            <person name="Walther T.C."/>
            <person name="Olsen J.V."/>
            <person name="Mann M."/>
        </authorList>
    </citation>
    <scope>ACETYLATION [LARGE SCALE ANALYSIS] AT LYS-401 AND LYS-1024</scope>
    <scope>IDENTIFICATION BY MASS SPECTROMETRY [LARGE SCALE ANALYSIS]</scope>
</reference>
<reference key="14">
    <citation type="journal article" date="2010" name="Sci. Signal.">
        <title>Quantitative phosphoproteomics reveals widespread full phosphorylation site occupancy during mitosis.</title>
        <authorList>
            <person name="Olsen J.V."/>
            <person name="Vermeulen M."/>
            <person name="Santamaria A."/>
            <person name="Kumar C."/>
            <person name="Miller M.L."/>
            <person name="Jensen L.J."/>
            <person name="Gnad F."/>
            <person name="Cox J."/>
            <person name="Jensen T.S."/>
            <person name="Nigg E.A."/>
            <person name="Brunak S."/>
            <person name="Mann M."/>
        </authorList>
    </citation>
    <scope>PHOSPHORYLATION [LARGE SCALE ANALYSIS] AT SER-289; SER-421; SER-553; SER-748; SER-800; SER-909; SER-1002; SER-1014; SER-1019 AND SER-1021</scope>
    <scope>IDENTIFICATION BY MASS SPECTROMETRY [LARGE SCALE ANALYSIS]</scope>
    <source>
        <tissue>Cervix carcinoma</tissue>
    </source>
</reference>
<reference key="15">
    <citation type="journal article" date="2011" name="Sci. Signal.">
        <title>System-wide temporal characterization of the proteome and phosphoproteome of human embryonic stem cell differentiation.</title>
        <authorList>
            <person name="Rigbolt K.T."/>
            <person name="Prokhorova T.A."/>
            <person name="Akimov V."/>
            <person name="Henningsen J."/>
            <person name="Johansen P.T."/>
            <person name="Kratchmarova I."/>
            <person name="Kassem M."/>
            <person name="Mann M."/>
            <person name="Olsen J.V."/>
            <person name="Blagoev B."/>
        </authorList>
    </citation>
    <scope>PHOSPHORYLATION [LARGE SCALE ANALYSIS] AT SER-144; SER-289; SER-421; SER-553; SER-944 AND SER-1002</scope>
    <scope>IDENTIFICATION BY MASS SPECTROMETRY [LARGE SCALE ANALYSIS]</scope>
</reference>
<reference key="16">
    <citation type="journal article" date="2012" name="Proc. Natl. Acad. Sci. U.S.A.">
        <title>N-terminal acetylome analyses and functional insights of the N-terminal acetyltransferase NatB.</title>
        <authorList>
            <person name="Van Damme P."/>
            <person name="Lasa M."/>
            <person name="Polevoda B."/>
            <person name="Gazquez C."/>
            <person name="Elosegui-Artola A."/>
            <person name="Kim D.S."/>
            <person name="De Juan-Pardo E."/>
            <person name="Demeyer K."/>
            <person name="Hole K."/>
            <person name="Larrea E."/>
            <person name="Timmerman E."/>
            <person name="Prieto J."/>
            <person name="Arnesen T."/>
            <person name="Sherman F."/>
            <person name="Gevaert K."/>
            <person name="Aldabe R."/>
        </authorList>
    </citation>
    <scope>ACETYLATION [LARGE SCALE ANALYSIS] AT ALA-2</scope>
    <scope>CLEAVAGE OF INITIATOR METHIONINE [LARGE SCALE ANALYSIS]</scope>
    <scope>IDENTIFICATION BY MASS SPECTROMETRY [LARGE SCALE ANALYSIS]</scope>
</reference>
<reference key="17">
    <citation type="journal article" date="2013" name="J. Proteome Res.">
        <title>Toward a comprehensive characterization of a human cancer cell phosphoproteome.</title>
        <authorList>
            <person name="Zhou H."/>
            <person name="Di Palma S."/>
            <person name="Preisinger C."/>
            <person name="Peng M."/>
            <person name="Polat A.N."/>
            <person name="Heck A.J."/>
            <person name="Mohammed S."/>
        </authorList>
    </citation>
    <scope>PHOSPHORYLATION [LARGE SCALE ANALYSIS] AT SER-97; SER-144; SER-289; SER-551; SER-553; SER-789; SER-815; SER-923; SER-929; SER-998; SER-1002; SER-1014 AND SER-1021</scope>
    <scope>IDENTIFICATION BY MASS SPECTROMETRY [LARGE SCALE ANALYSIS]</scope>
    <source>
        <tissue>Cervix carcinoma</tissue>
        <tissue>Erythroleukemia</tissue>
    </source>
</reference>
<reference key="18">
    <citation type="journal article" date="2014" name="J. Proteomics">
        <title>An enzyme assisted RP-RPLC approach for in-depth analysis of human liver phosphoproteome.</title>
        <authorList>
            <person name="Bian Y."/>
            <person name="Song C."/>
            <person name="Cheng K."/>
            <person name="Dong M."/>
            <person name="Wang F."/>
            <person name="Huang J."/>
            <person name="Sun D."/>
            <person name="Wang L."/>
            <person name="Ye M."/>
            <person name="Zou H."/>
        </authorList>
    </citation>
    <scope>PHOSPHORYLATION [LARGE SCALE ANALYSIS] AT SER-289; SER-550; SER-551; SER-553 AND SER-1002</scope>
    <scope>IDENTIFICATION BY MASS SPECTROMETRY [LARGE SCALE ANALYSIS]</scope>
    <source>
        <tissue>Liver</tissue>
    </source>
</reference>
<reference key="19">
    <citation type="journal article" date="2014" name="Mol. Cell. Proteomics">
        <title>Immunoaffinity enrichment and mass spectrometry analysis of protein methylation.</title>
        <authorList>
            <person name="Guo A."/>
            <person name="Gu H."/>
            <person name="Zhou J."/>
            <person name="Mulhern D."/>
            <person name="Wang Y."/>
            <person name="Lee K.A."/>
            <person name="Yang V."/>
            <person name="Aguiar M."/>
            <person name="Kornhauser J."/>
            <person name="Jia X."/>
            <person name="Ren J."/>
            <person name="Beausoleil S.A."/>
            <person name="Silva J.C."/>
            <person name="Vemulapalli V."/>
            <person name="Bedford M.T."/>
            <person name="Comb M.J."/>
        </authorList>
    </citation>
    <scope>METHYLATION [LARGE SCALE ANALYSIS] AT ARG-1017</scope>
    <scope>IDENTIFICATION BY MASS SPECTROMETRY [LARGE SCALE ANALYSIS]</scope>
    <source>
        <tissue>Colon carcinoma</tissue>
    </source>
</reference>
<reference key="20">
    <citation type="journal article" date="2014" name="Nat. Struct. Mol. Biol.">
        <title>Uncovering global SUMOylation signaling networks in a site-specific manner.</title>
        <authorList>
            <person name="Hendriks I.A."/>
            <person name="D'Souza R.C."/>
            <person name="Yang B."/>
            <person name="Verlaan-de Vries M."/>
            <person name="Mann M."/>
            <person name="Vertegaal A.C."/>
        </authorList>
    </citation>
    <scope>SUMOYLATION [LARGE SCALE ANALYSIS] AT LYS-500</scope>
    <scope>IDENTIFICATION BY MASS SPECTROMETRY [LARGE SCALE ANALYSIS]</scope>
</reference>
<reference key="21">
    <citation type="journal article" date="2015" name="Mol. Cell. Proteomics">
        <title>System-wide analysis of SUMOylation dynamics in response to replication stress reveals novel small ubiquitin-like modified target proteins and acceptor lysines relevant for genome stability.</title>
        <authorList>
            <person name="Xiao Z."/>
            <person name="Chang J.G."/>
            <person name="Hendriks I.A."/>
            <person name="Sigurdsson J.O."/>
            <person name="Olsen J.V."/>
            <person name="Vertegaal A.C."/>
        </authorList>
    </citation>
    <scope>SUMOYLATION [LARGE SCALE ANALYSIS] AT LYS-500 AND LYS-884</scope>
    <scope>IDENTIFICATION BY MASS SPECTROMETRY [LARGE SCALE ANALYSIS]</scope>
</reference>
<reference key="22">
    <citation type="journal article" date="2017" name="Nat. Struct. Mol. Biol.">
        <title>Site-specific mapping of the human SUMO proteome reveals co-modification with phosphorylation.</title>
        <authorList>
            <person name="Hendriks I.A."/>
            <person name="Lyon D."/>
            <person name="Young C."/>
            <person name="Jensen L.J."/>
            <person name="Vertegaal A.C."/>
            <person name="Nielsen M.L."/>
        </authorList>
    </citation>
    <scope>SUMOYLATION [LARGE SCALE ANALYSIS] AT LYS-500; LYS-884; LYS-1024 AND LYS-1027</scope>
    <scope>IDENTIFICATION BY MASS SPECTROMETRY [LARGE SCALE ANALYSIS]</scope>
</reference>
<sequence>MAAATGAVAASAASGQAEGKKITDLRVIDLKSELKRRNLDITGVKTVLISRLKQAIEEEGGDPDNIELTVSTDTPNKKPTKGKGKKHEADELSGDASVEDDAFIKDCELENQEAHEQDGNDELKDSEEFGENEEENVHSKELLSAEENKRAHELIEAEGIEDIEKEDIESQEIEAQEGEDDTFLTAQDGEEEENEKDIAGSGDGTQEVSKPLPSEGSLAEADHTAHEEMEAHTTVKEAEDDNISVTIQAEDAITLDFDGDDLLETGKNVKITDSEASKPKDGQDAIAQSPEKESKDYEMNANHKDGKKEDCVKGDPVEKEARESSKKAESGDKEKDTLKKGPSSTGASGQAKSSSKESKDSKTSSKDDKGSTSSTSGSSGSSTKNIWVSGLSSNTKAADLKNLFGKYGKVLSAKVVTNARSPGAKCYGIVTMSSSTEVSRCIAHLHRTELHGQLISVEKVKGDPSKKEMKKENDEKSSSRSSGDKKNTSDRSSKTQASVKKEEKRSSEKSEKKESKDTKKIEGKDEKNDNGASGQTSESIKKSEEKKRISSKSPGHMVILDQTKGDHCRPSRRGRYEKIHGRSKEKERASLDKKRDKDYRRKEILPFEKMKEQRLREHLVRFERLRRAMELRRRREIAERERRERERIRIIREREERERLQRERERLEIERQKLERERMERERLERERIRIEQERRKEAERIAREREELRRQQQQLRYEQEKRNSLKRPRDVDHRRDDPYWSENKKLSLDTDARFGHGSDYSRQQNRFNDFDHRERGRFPESSAVQSSSFERRDRFVGQSEGKKARPTARREDPSFERYPKNFSDSRRNEPPPPRNELRESDRREVRGERDERRTVIIHDRPDITHPRHPREAGPNPSRPTSWKSEGSMSTDKRETRVERPERSGREVSGHSVRGAPPGNRSSASGYGSREGDRGVITDRGGGSQHYPEERHVVERHGRDTSGPRKEWHGPPSQGPSYHDTRRMGDGRAGAGMITQHSSNASPINRIVQISGNSMPRGSGSGFKPFKGGPPRRF</sequence>
<organism>
    <name type="scientific">Homo sapiens</name>
    <name type="common">Human</name>
    <dbReference type="NCBI Taxonomy" id="9606"/>
    <lineage>
        <taxon>Eukaryota</taxon>
        <taxon>Metazoa</taxon>
        <taxon>Chordata</taxon>
        <taxon>Craniata</taxon>
        <taxon>Vertebrata</taxon>
        <taxon>Euteleostomi</taxon>
        <taxon>Mammalia</taxon>
        <taxon>Eutheria</taxon>
        <taxon>Euarchontoglires</taxon>
        <taxon>Primates</taxon>
        <taxon>Haplorrhini</taxon>
        <taxon>Catarrhini</taxon>
        <taxon>Hominidae</taxon>
        <taxon>Homo</taxon>
    </lineage>
</organism>
<dbReference type="EMBL" id="AK000867">
    <property type="protein sequence ID" value="BAA91401.1"/>
    <property type="molecule type" value="mRNA"/>
</dbReference>
<dbReference type="EMBL" id="AK023275">
    <property type="protein sequence ID" value="BAB14502.1"/>
    <property type="status" value="ALT_INIT"/>
    <property type="molecule type" value="mRNA"/>
</dbReference>
<dbReference type="EMBL" id="AK024710">
    <property type="protein sequence ID" value="BAB14971.1"/>
    <property type="status" value="ALT_SEQ"/>
    <property type="molecule type" value="mRNA"/>
</dbReference>
<dbReference type="EMBL" id="AK055195">
    <property type="protein sequence ID" value="BAG51484.1"/>
    <property type="molecule type" value="mRNA"/>
</dbReference>
<dbReference type="EMBL" id="AK291423">
    <property type="protein sequence ID" value="BAF84112.1"/>
    <property type="molecule type" value="mRNA"/>
</dbReference>
<dbReference type="EMBL" id="AC025918">
    <property type="status" value="NOT_ANNOTATED_CDS"/>
    <property type="molecule type" value="Genomic_DNA"/>
</dbReference>
<dbReference type="EMBL" id="AC090515">
    <property type="status" value="NOT_ANNOTATED_CDS"/>
    <property type="molecule type" value="Genomic_DNA"/>
</dbReference>
<dbReference type="EMBL" id="BC014944">
    <property type="protein sequence ID" value="AAH14944.1"/>
    <property type="molecule type" value="mRNA"/>
</dbReference>
<dbReference type="EMBL" id="BC046119">
    <property type="protein sequence ID" value="AAH46119.3"/>
    <property type="molecule type" value="mRNA"/>
</dbReference>
<dbReference type="EMBL" id="BC108656">
    <property type="protein sequence ID" value="AAI08657.1"/>
    <property type="status" value="ALT_SEQ"/>
    <property type="molecule type" value="mRNA"/>
</dbReference>
<dbReference type="EMBL" id="BC140851">
    <property type="protein sequence ID" value="AAI40852.1"/>
    <property type="molecule type" value="mRNA"/>
</dbReference>
<dbReference type="EMBL" id="AL834297">
    <property type="protein sequence ID" value="CAH56362.1"/>
    <property type="molecule type" value="mRNA"/>
</dbReference>
<dbReference type="CCDS" id="CCDS10168.2">
    <molecule id="Q9NWH9-1"/>
</dbReference>
<dbReference type="RefSeq" id="NP_001013865.1">
    <property type="nucleotide sequence ID" value="NM_001013843.2"/>
</dbReference>
<dbReference type="RefSeq" id="NP_079031.2">
    <molecule id="Q9NWH9-1"/>
    <property type="nucleotide sequence ID" value="NM_024755.4"/>
</dbReference>
<dbReference type="RefSeq" id="XP_006720753.1">
    <property type="nucleotide sequence ID" value="XM_006720690.1"/>
</dbReference>
<dbReference type="RefSeq" id="XP_016878069.1">
    <property type="nucleotide sequence ID" value="XM_017022580.1"/>
</dbReference>
<dbReference type="SMR" id="Q9NWH9"/>
<dbReference type="BioGRID" id="122906">
    <property type="interactions" value="166"/>
</dbReference>
<dbReference type="FunCoup" id="Q9NWH9">
    <property type="interactions" value="4757"/>
</dbReference>
<dbReference type="IntAct" id="Q9NWH9">
    <property type="interactions" value="105"/>
</dbReference>
<dbReference type="MINT" id="Q9NWH9"/>
<dbReference type="STRING" id="9606.ENSP00000369887"/>
<dbReference type="BindingDB" id="Q9NWH9"/>
<dbReference type="ChEMBL" id="CHEMBL4523469"/>
<dbReference type="GlyCosmos" id="Q9NWH9">
    <property type="glycosylation" value="3 sites, 1 glycan"/>
</dbReference>
<dbReference type="GlyGen" id="Q9NWH9">
    <property type="glycosylation" value="6 sites, 1 N-linked glycan (1 site), 2 O-linked glycans (4 sites)"/>
</dbReference>
<dbReference type="iPTMnet" id="Q9NWH9"/>
<dbReference type="MetOSite" id="Q9NWH9"/>
<dbReference type="PhosphoSitePlus" id="Q9NWH9"/>
<dbReference type="SwissPalm" id="Q9NWH9"/>
<dbReference type="BioMuta" id="SLTM"/>
<dbReference type="DMDM" id="160185645"/>
<dbReference type="jPOST" id="Q9NWH9"/>
<dbReference type="MassIVE" id="Q9NWH9"/>
<dbReference type="PaxDb" id="9606-ENSP00000369887"/>
<dbReference type="PeptideAtlas" id="Q9NWH9"/>
<dbReference type="ProteomicsDB" id="1866"/>
<dbReference type="ProteomicsDB" id="82940">
    <molecule id="Q9NWH9-1"/>
</dbReference>
<dbReference type="Pumba" id="Q9NWH9"/>
<dbReference type="Antibodypedia" id="25331">
    <property type="antibodies" value="128 antibodies from 20 providers"/>
</dbReference>
<dbReference type="DNASU" id="79811"/>
<dbReference type="Ensembl" id="ENST00000380516.7">
    <molecule id="Q9NWH9-1"/>
    <property type="protein sequence ID" value="ENSP00000369887.2"/>
    <property type="gene ID" value="ENSG00000137776.17"/>
</dbReference>
<dbReference type="GeneID" id="79811"/>
<dbReference type="KEGG" id="hsa:79811"/>
<dbReference type="MANE-Select" id="ENST00000380516.7">
    <property type="protein sequence ID" value="ENSP00000369887.2"/>
    <property type="RefSeq nucleotide sequence ID" value="NM_024755.4"/>
    <property type="RefSeq protein sequence ID" value="NP_079031.2"/>
</dbReference>
<dbReference type="UCSC" id="uc002afp.3">
    <molecule id="Q9NWH9-1"/>
    <property type="organism name" value="human"/>
</dbReference>
<dbReference type="AGR" id="HGNC:20709"/>
<dbReference type="CTD" id="79811"/>
<dbReference type="DisGeNET" id="79811"/>
<dbReference type="GeneCards" id="SLTM"/>
<dbReference type="HGNC" id="HGNC:20709">
    <property type="gene designation" value="SLTM"/>
</dbReference>
<dbReference type="HPA" id="ENSG00000137776">
    <property type="expression patterns" value="Low tissue specificity"/>
</dbReference>
<dbReference type="MIM" id="620992">
    <property type="type" value="gene"/>
</dbReference>
<dbReference type="neXtProt" id="NX_Q9NWH9"/>
<dbReference type="OpenTargets" id="ENSG00000137776"/>
<dbReference type="PharmGKB" id="PA142670898"/>
<dbReference type="VEuPathDB" id="HostDB:ENSG00000137776"/>
<dbReference type="eggNOG" id="KOG4661">
    <property type="taxonomic scope" value="Eukaryota"/>
</dbReference>
<dbReference type="GeneTree" id="ENSGT00940000156573"/>
<dbReference type="HOGENOM" id="CLU_011145_1_0_1"/>
<dbReference type="InParanoid" id="Q9NWH9"/>
<dbReference type="OMA" id="HEEMEGN"/>
<dbReference type="OrthoDB" id="6159259at2759"/>
<dbReference type="PAN-GO" id="Q9NWH9">
    <property type="GO annotations" value="4 GO annotations based on evolutionary models"/>
</dbReference>
<dbReference type="PhylomeDB" id="Q9NWH9"/>
<dbReference type="TreeFam" id="TF325240"/>
<dbReference type="PathwayCommons" id="Q9NWH9"/>
<dbReference type="SignaLink" id="Q9NWH9"/>
<dbReference type="BioGRID-ORCS" id="79811">
    <property type="hits" value="45 hits in 1156 CRISPR screens"/>
</dbReference>
<dbReference type="CD-CODE" id="91857CE7">
    <property type="entry name" value="Nucleolus"/>
</dbReference>
<dbReference type="ChiTaRS" id="SLTM">
    <property type="organism name" value="human"/>
</dbReference>
<dbReference type="GenomeRNAi" id="79811"/>
<dbReference type="Pharos" id="Q9NWH9">
    <property type="development level" value="Tbio"/>
</dbReference>
<dbReference type="PRO" id="PR:Q9NWH9"/>
<dbReference type="Proteomes" id="UP000005640">
    <property type="component" value="Chromosome 15"/>
</dbReference>
<dbReference type="RNAct" id="Q9NWH9">
    <property type="molecule type" value="protein"/>
</dbReference>
<dbReference type="Bgee" id="ENSG00000137776">
    <property type="expression patterns" value="Expressed in calcaneal tendon and 200 other cell types or tissues"/>
</dbReference>
<dbReference type="ExpressionAtlas" id="Q9NWH9">
    <property type="expression patterns" value="baseline and differential"/>
</dbReference>
<dbReference type="GO" id="GO:0016604">
    <property type="term" value="C:nuclear body"/>
    <property type="evidence" value="ECO:0000314"/>
    <property type="project" value="HPA"/>
</dbReference>
<dbReference type="GO" id="GO:0005654">
    <property type="term" value="C:nucleoplasm"/>
    <property type="evidence" value="ECO:0000314"/>
    <property type="project" value="HPA"/>
</dbReference>
<dbReference type="GO" id="GO:0005634">
    <property type="term" value="C:nucleus"/>
    <property type="evidence" value="ECO:0000318"/>
    <property type="project" value="GO_Central"/>
</dbReference>
<dbReference type="GO" id="GO:0003723">
    <property type="term" value="F:RNA binding"/>
    <property type="evidence" value="ECO:0007005"/>
    <property type="project" value="UniProtKB"/>
</dbReference>
<dbReference type="GO" id="GO:0043565">
    <property type="term" value="F:sequence-specific DNA binding"/>
    <property type="evidence" value="ECO:0000318"/>
    <property type="project" value="GO_Central"/>
</dbReference>
<dbReference type="GO" id="GO:0006915">
    <property type="term" value="P:apoptotic process"/>
    <property type="evidence" value="ECO:0007669"/>
    <property type="project" value="UniProtKB-KW"/>
</dbReference>
<dbReference type="GO" id="GO:0050684">
    <property type="term" value="P:regulation of mRNA processing"/>
    <property type="evidence" value="ECO:0000318"/>
    <property type="project" value="GO_Central"/>
</dbReference>
<dbReference type="GO" id="GO:0006357">
    <property type="term" value="P:regulation of transcription by RNA polymerase II"/>
    <property type="evidence" value="ECO:0000318"/>
    <property type="project" value="GO_Central"/>
</dbReference>
<dbReference type="CDD" id="cd12678">
    <property type="entry name" value="RRM_SLTM"/>
    <property type="match status" value="1"/>
</dbReference>
<dbReference type="FunFam" id="1.10.720.30:FF:000010">
    <property type="entry name" value="SAFB-like transcription modulator isoform X2"/>
    <property type="match status" value="1"/>
</dbReference>
<dbReference type="FunFam" id="3.30.70.330:FF:000238">
    <property type="entry name" value="SAFB-like transcription modulator isoform X2"/>
    <property type="match status" value="1"/>
</dbReference>
<dbReference type="Gene3D" id="3.30.70.330">
    <property type="match status" value="1"/>
</dbReference>
<dbReference type="Gene3D" id="1.10.720.30">
    <property type="entry name" value="SAP domain"/>
    <property type="match status" value="1"/>
</dbReference>
<dbReference type="InterPro" id="IPR012677">
    <property type="entry name" value="Nucleotide-bd_a/b_plait_sf"/>
</dbReference>
<dbReference type="InterPro" id="IPR035979">
    <property type="entry name" value="RBD_domain_sf"/>
</dbReference>
<dbReference type="InterPro" id="IPR000504">
    <property type="entry name" value="RRM_dom"/>
</dbReference>
<dbReference type="InterPro" id="IPR051738">
    <property type="entry name" value="SAF_Modulators"/>
</dbReference>
<dbReference type="InterPro" id="IPR003034">
    <property type="entry name" value="SAP_dom"/>
</dbReference>
<dbReference type="InterPro" id="IPR036361">
    <property type="entry name" value="SAP_dom_sf"/>
</dbReference>
<dbReference type="PANTHER" id="PTHR15683:SF5">
    <property type="entry name" value="SAFB-LIKE TRANSCRIPTION MODULATOR"/>
    <property type="match status" value="1"/>
</dbReference>
<dbReference type="PANTHER" id="PTHR15683">
    <property type="entry name" value="SCAFFOLD ATTACHMENT FACTOR B-RELATED"/>
    <property type="match status" value="1"/>
</dbReference>
<dbReference type="Pfam" id="PF00076">
    <property type="entry name" value="RRM_1"/>
    <property type="match status" value="1"/>
</dbReference>
<dbReference type="Pfam" id="PF02037">
    <property type="entry name" value="SAP"/>
    <property type="match status" value="1"/>
</dbReference>
<dbReference type="SMART" id="SM00360">
    <property type="entry name" value="RRM"/>
    <property type="match status" value="1"/>
</dbReference>
<dbReference type="SMART" id="SM00513">
    <property type="entry name" value="SAP"/>
    <property type="match status" value="1"/>
</dbReference>
<dbReference type="SUPFAM" id="SSF54928">
    <property type="entry name" value="RNA-binding domain, RBD"/>
    <property type="match status" value="1"/>
</dbReference>
<dbReference type="SUPFAM" id="SSF68906">
    <property type="entry name" value="SAP domain"/>
    <property type="match status" value="1"/>
</dbReference>
<dbReference type="PROSITE" id="PS50102">
    <property type="entry name" value="RRM"/>
    <property type="match status" value="1"/>
</dbReference>
<dbReference type="PROSITE" id="PS50800">
    <property type="entry name" value="SAP"/>
    <property type="match status" value="1"/>
</dbReference>
<proteinExistence type="evidence at protein level"/>
<name>SLTM_HUMAN</name>
<evidence type="ECO:0000250" key="1"/>
<evidence type="ECO:0000250" key="2">
    <source>
        <dbReference type="UniProtKB" id="Q8CH25"/>
    </source>
</evidence>
<evidence type="ECO:0000255" key="3"/>
<evidence type="ECO:0000255" key="4">
    <source>
        <dbReference type="PROSITE-ProRule" id="PRU00176"/>
    </source>
</evidence>
<evidence type="ECO:0000255" key="5">
    <source>
        <dbReference type="PROSITE-ProRule" id="PRU00186"/>
    </source>
</evidence>
<evidence type="ECO:0000256" key="6">
    <source>
        <dbReference type="SAM" id="MobiDB-lite"/>
    </source>
</evidence>
<evidence type="ECO:0000269" key="7">
    <source ref="4"/>
</evidence>
<evidence type="ECO:0000303" key="8">
    <source>
    </source>
</evidence>
<evidence type="ECO:0000305" key="9"/>
<evidence type="ECO:0007744" key="10">
    <source>
    </source>
</evidence>
<evidence type="ECO:0007744" key="11">
    <source>
    </source>
</evidence>
<evidence type="ECO:0007744" key="12">
    <source>
    </source>
</evidence>
<evidence type="ECO:0007744" key="13">
    <source>
    </source>
</evidence>
<evidence type="ECO:0007744" key="14">
    <source>
    </source>
</evidence>
<evidence type="ECO:0007744" key="15">
    <source>
    </source>
</evidence>
<evidence type="ECO:0007744" key="16">
    <source>
    </source>
</evidence>
<evidence type="ECO:0007744" key="17">
    <source>
    </source>
</evidence>
<evidence type="ECO:0007744" key="18">
    <source>
    </source>
</evidence>
<evidence type="ECO:0007744" key="19">
    <source>
    </source>
</evidence>
<evidence type="ECO:0007744" key="20">
    <source>
    </source>
</evidence>
<evidence type="ECO:0007744" key="21">
    <source>
    </source>
</evidence>
<evidence type="ECO:0007744" key="22">
    <source>
    </source>
</evidence>
<evidence type="ECO:0007744" key="23">
    <source>
    </source>
</evidence>
<evidence type="ECO:0007744" key="24">
    <source>
    </source>
</evidence>
<evidence type="ECO:0007744" key="25">
    <source>
    </source>
</evidence>
<evidence type="ECO:0007744" key="26">
    <source>
    </source>
</evidence>
<comment type="function">
    <text evidence="1">When overexpressed, acts as a general inhibitor of transcription that eventually leads to apoptosis.</text>
</comment>
<comment type="interaction">
    <interactant intactId="EBI-2814558">
        <id>Q9NWH9</id>
    </interactant>
    <interactant intactId="EBI-307531">
        <id>P23508</id>
        <label>MCC</label>
    </interactant>
    <organismsDiffer>false</organismsDiffer>
    <experiments>3</experiments>
</comment>
<comment type="subcellular location">
    <subcellularLocation>
        <location evidence="1">Nucleus</location>
    </subcellularLocation>
    <text evidence="1">Detected in punctate structures.</text>
</comment>
<comment type="alternative products">
    <event type="alternative splicing"/>
    <isoform>
        <id>Q9NWH9-1</id>
        <name>1</name>
        <sequence type="displayed"/>
    </isoform>
    <isoform>
        <id>Q9NWH9-3</id>
        <name>2</name>
        <sequence type="described" ref="VSP_056051"/>
    </isoform>
</comment>
<comment type="sequence caution" evidence="9">
    <conflict type="miscellaneous discrepancy">
        <sequence resource="EMBL-CDS" id="AAI08657"/>
    </conflict>
    <text>Contaminating sequence. Potential poly-A sequence.</text>
</comment>
<comment type="sequence caution" evidence="9">
    <conflict type="erroneous initiation">
        <sequence resource="EMBL-CDS" id="BAB14502"/>
    </conflict>
</comment>
<comment type="sequence caution" evidence="9">
    <conflict type="erroneous initiation">
        <sequence resource="EMBL-CDS" id="BAB14971"/>
    </conflict>
    <text>Truncated N-terminus.</text>
</comment>
<comment type="sequence caution" evidence="9">
    <conflict type="miscellaneous discrepancy">
        <sequence resource="EMBL-CDS" id="BAB14971"/>
    </conflict>
    <text>Contaminating sequence. Potential poly-A sequence.</text>
</comment>
<gene>
    <name type="primary">SLTM</name>
    <name type="synonym">MET</name>
</gene>
<keyword id="KW-0007">Acetylation</keyword>
<keyword id="KW-0025">Alternative splicing</keyword>
<keyword id="KW-0053">Apoptosis</keyword>
<keyword id="KW-0175">Coiled coil</keyword>
<keyword id="KW-0903">Direct protein sequencing</keyword>
<keyword id="KW-1017">Isopeptide bond</keyword>
<keyword id="KW-0488">Methylation</keyword>
<keyword id="KW-0539">Nucleus</keyword>
<keyword id="KW-0597">Phosphoprotein</keyword>
<keyword id="KW-1267">Proteomics identification</keyword>
<keyword id="KW-1185">Reference proteome</keyword>
<keyword id="KW-0678">Repressor</keyword>
<keyword id="KW-0694">RNA-binding</keyword>
<keyword id="KW-0804">Transcription</keyword>
<keyword id="KW-0805">Transcription regulation</keyword>
<keyword id="KW-0832">Ubl conjugation</keyword>
<feature type="initiator methionine" description="Removed" evidence="7 16 20">
    <location>
        <position position="1"/>
    </location>
</feature>
<feature type="chain" id="PRO_0000307798" description="SAFB-like transcription modulator">
    <location>
        <begin position="2"/>
        <end position="1034"/>
    </location>
</feature>
<feature type="domain" description="SAP" evidence="5">
    <location>
        <begin position="22"/>
        <end position="56"/>
    </location>
</feature>
<feature type="domain" description="RRM" evidence="4">
    <location>
        <begin position="384"/>
        <end position="462"/>
    </location>
</feature>
<feature type="region of interest" description="Disordered" evidence="6">
    <location>
        <begin position="55"/>
        <end position="242"/>
    </location>
</feature>
<feature type="region of interest" description="Disordered" evidence="6">
    <location>
        <begin position="268"/>
        <end position="387"/>
    </location>
</feature>
<feature type="region of interest" description="Disordered" evidence="6">
    <location>
        <begin position="456"/>
        <end position="599"/>
    </location>
</feature>
<feature type="region of interest" description="Disordered" evidence="6">
    <location>
        <begin position="713"/>
        <end position="1034"/>
    </location>
</feature>
<feature type="coiled-coil region" evidence="3">
    <location>
        <begin position="609"/>
        <end position="728"/>
    </location>
</feature>
<feature type="compositionally biased region" description="Acidic residues" evidence="6">
    <location>
        <begin position="91"/>
        <end position="101"/>
    </location>
</feature>
<feature type="compositionally biased region" description="Basic and acidic residues" evidence="6">
    <location>
        <begin position="102"/>
        <end position="127"/>
    </location>
</feature>
<feature type="compositionally biased region" description="Basic and acidic residues" evidence="6">
    <location>
        <begin position="135"/>
        <end position="155"/>
    </location>
</feature>
<feature type="compositionally biased region" description="Acidic residues" evidence="6">
    <location>
        <begin position="156"/>
        <end position="195"/>
    </location>
</feature>
<feature type="compositionally biased region" description="Basic and acidic residues" evidence="6">
    <location>
        <begin position="220"/>
        <end position="237"/>
    </location>
</feature>
<feature type="compositionally biased region" description="Basic and acidic residues" evidence="6">
    <location>
        <begin position="270"/>
        <end position="283"/>
    </location>
</feature>
<feature type="compositionally biased region" description="Basic and acidic residues" evidence="6">
    <location>
        <begin position="290"/>
        <end position="339"/>
    </location>
</feature>
<feature type="compositionally biased region" description="Polar residues" evidence="6">
    <location>
        <begin position="342"/>
        <end position="351"/>
    </location>
</feature>
<feature type="compositionally biased region" description="Basic and acidic residues" evidence="6">
    <location>
        <begin position="354"/>
        <end position="370"/>
    </location>
</feature>
<feature type="compositionally biased region" description="Low complexity" evidence="6">
    <location>
        <begin position="371"/>
        <end position="384"/>
    </location>
</feature>
<feature type="compositionally biased region" description="Basic and acidic residues" evidence="6">
    <location>
        <begin position="458"/>
        <end position="529"/>
    </location>
</feature>
<feature type="compositionally biased region" description="Basic and acidic residues" evidence="6">
    <location>
        <begin position="539"/>
        <end position="548"/>
    </location>
</feature>
<feature type="compositionally biased region" description="Basic and acidic residues" evidence="6">
    <location>
        <begin position="563"/>
        <end position="599"/>
    </location>
</feature>
<feature type="compositionally biased region" description="Basic and acidic residues" evidence="6">
    <location>
        <begin position="718"/>
        <end position="757"/>
    </location>
</feature>
<feature type="compositionally biased region" description="Basic and acidic residues" evidence="6">
    <location>
        <begin position="769"/>
        <end position="779"/>
    </location>
</feature>
<feature type="compositionally biased region" description="Basic and acidic residues" evidence="6">
    <location>
        <begin position="790"/>
        <end position="872"/>
    </location>
</feature>
<feature type="compositionally biased region" description="Polar residues" evidence="6">
    <location>
        <begin position="879"/>
        <end position="890"/>
    </location>
</feature>
<feature type="compositionally biased region" description="Basic and acidic residues" evidence="6">
    <location>
        <begin position="891"/>
        <end position="909"/>
    </location>
</feature>
<feature type="compositionally biased region" description="Basic and acidic residues" evidence="6">
    <location>
        <begin position="947"/>
        <end position="969"/>
    </location>
</feature>
<feature type="compositionally biased region" description="Polar residues" evidence="6">
    <location>
        <begin position="995"/>
        <end position="1016"/>
    </location>
</feature>
<feature type="compositionally biased region" description="Low complexity" evidence="6">
    <location>
        <begin position="1022"/>
        <end position="1034"/>
    </location>
</feature>
<feature type="modified residue" description="N-acetylalanine" evidence="7 16 20">
    <location>
        <position position="2"/>
    </location>
</feature>
<feature type="modified residue" description="Phosphoserine" evidence="11">
    <location>
        <position position="93"/>
    </location>
</feature>
<feature type="modified residue" description="Phosphoserine" evidence="11 21">
    <location>
        <position position="97"/>
    </location>
</feature>
<feature type="modified residue" description="Phosphoserine" evidence="2">
    <location>
        <position position="139"/>
    </location>
</feature>
<feature type="modified residue" description="Phosphoserine" evidence="19 21">
    <location>
        <position position="144"/>
    </location>
</feature>
<feature type="modified residue" description="Phosphoserine" evidence="10 11 14 15 18 19 21 23">
    <location>
        <position position="289"/>
    </location>
</feature>
<feature type="modified residue" description="N6-acetyllysine" evidence="17">
    <location>
        <position position="401"/>
    </location>
</feature>
<feature type="modified residue" description="Phosphoserine" evidence="18 19">
    <location>
        <position position="421"/>
    </location>
</feature>
<feature type="modified residue" description="Phosphoserine" evidence="13 23">
    <location>
        <position position="550"/>
    </location>
</feature>
<feature type="modified residue" description="Phosphoserine" evidence="13 21 23">
    <location>
        <position position="551"/>
    </location>
</feature>
<feature type="modified residue" description="Phosphoserine" evidence="11 13 14 15 18 19 21 23">
    <location>
        <position position="553"/>
    </location>
</feature>
<feature type="modified residue" description="Phosphoserine" evidence="15 18">
    <location>
        <position position="748"/>
    </location>
</feature>
<feature type="modified residue" description="Phosphoserine" evidence="21">
    <location>
        <position position="789"/>
    </location>
</feature>
<feature type="modified residue" description="Phosphoserine" evidence="18">
    <location>
        <position position="800"/>
    </location>
</feature>
<feature type="modified residue" description="Phosphoserine" evidence="21">
    <location>
        <position position="815"/>
    </location>
</feature>
<feature type="modified residue" description="Phosphoserine" evidence="18">
    <location>
        <position position="909"/>
    </location>
</feature>
<feature type="modified residue" description="Phosphoserine" evidence="21">
    <location>
        <position position="923"/>
    </location>
</feature>
<feature type="modified residue" description="Phosphoserine" evidence="21">
    <location>
        <position position="929"/>
    </location>
</feature>
<feature type="modified residue" description="Phosphoserine" evidence="19">
    <location>
        <position position="944"/>
    </location>
</feature>
<feature type="modified residue" description="Phosphoserine" evidence="21">
    <location>
        <position position="998"/>
    </location>
</feature>
<feature type="modified residue" description="Phosphoserine" evidence="11 12 13 14 18 19 21 23">
    <location>
        <position position="1002"/>
    </location>
</feature>
<feature type="modified residue" description="Phosphoserine" evidence="13 18 21">
    <location>
        <position position="1014"/>
    </location>
</feature>
<feature type="modified residue" description="Omega-N-methylarginine" evidence="22">
    <location>
        <position position="1017"/>
    </location>
</feature>
<feature type="modified residue" description="Phosphoserine" evidence="18">
    <location>
        <position position="1019"/>
    </location>
</feature>
<feature type="modified residue" description="Phosphoserine" evidence="18 21">
    <location>
        <position position="1021"/>
    </location>
</feature>
<feature type="modified residue" description="N6-acetyllysine; alternate" evidence="17">
    <location>
        <position position="1024"/>
    </location>
</feature>
<feature type="cross-link" description="Glycyl lysine isopeptide (Lys-Gly) (interchain with G-Cter in SUMO2)" evidence="24 25 26">
    <location>
        <position position="500"/>
    </location>
</feature>
<feature type="cross-link" description="Glycyl lysine isopeptide (Lys-Gly) (interchain with G-Cter in SUMO2)" evidence="25 26">
    <location>
        <position position="884"/>
    </location>
</feature>
<feature type="cross-link" description="Glycyl lysine isopeptide (Lys-Gly) (interchain with G-Cter in SUMO2); alternate" evidence="26">
    <location>
        <position position="1024"/>
    </location>
</feature>
<feature type="cross-link" description="Glycyl lysine isopeptide (Lys-Gly) (interchain with G-Cter in SUMO2)" evidence="26">
    <location>
        <position position="1027"/>
    </location>
</feature>
<feature type="splice variant" id="VSP_056051" description="In isoform 2." evidence="8">
    <location>
        <begin position="1"/>
        <end position="431"/>
    </location>
</feature>
<feature type="sequence variant" id="VAR_037088" description="In dbSNP:rs7175939.">
    <original>V</original>
    <variation>L</variation>
    <location>
        <position position="235"/>
    </location>
</feature>
<feature type="sequence conflict" description="In Ref. 1; BAA91401." evidence="9" ref="1">
    <original>S</original>
    <variation>F</variation>
    <location>
        <position position="126"/>
    </location>
</feature>
<feature type="sequence conflict" description="In Ref. 1; BAA91401." evidence="9" ref="1">
    <original>E</original>
    <variation>V</variation>
    <location>
        <position position="511"/>
    </location>
</feature>
<feature type="sequence conflict" description="In Ref. 3; AAH14944." evidence="9" ref="3">
    <original>P</original>
    <variation>S</variation>
    <location>
        <position position="606"/>
    </location>
</feature>
<accession>Q9NWH9</accession>
<accession>A8K5V8</accession>
<accession>B2RTX3</accession>
<accession>Q2VPK7</accession>
<accession>Q52MB3</accession>
<accession>Q658J7</accession>
<accession>Q6ZNF2</accession>
<accession>Q86TK6</accession>
<accession>Q9H7C3</accession>
<accession>Q9H8U9</accession>